<reference key="1">
    <citation type="journal article" date="2006" name="Mol. Microbiol.">
        <title>Role of pathogenicity island-associated integrases in the genome plasticity of uropathogenic Escherichia coli strain 536.</title>
        <authorList>
            <person name="Hochhut B."/>
            <person name="Wilde C."/>
            <person name="Balling G."/>
            <person name="Middendorf B."/>
            <person name="Dobrindt U."/>
            <person name="Brzuszkiewicz E."/>
            <person name="Gottschalk G."/>
            <person name="Carniel E."/>
            <person name="Hacker J."/>
        </authorList>
    </citation>
    <scope>NUCLEOTIDE SEQUENCE [LARGE SCALE GENOMIC DNA]</scope>
    <source>
        <strain>536 / UPEC</strain>
    </source>
</reference>
<protein>
    <recommendedName>
        <fullName evidence="1">Chitooligosaccharide deacetylase</fullName>
        <shortName evidence="1">COD</shortName>
        <ecNumber evidence="1">3.5.1.105</ecNumber>
    </recommendedName>
    <alternativeName>
        <fullName evidence="1">Chitin disaccharide deacetylase</fullName>
    </alternativeName>
    <alternativeName>
        <fullName evidence="1">Chitobiose deacetylase</fullName>
    </alternativeName>
    <alternativeName>
        <fullName evidence="1">Chitobiose-6P deacetylase</fullName>
    </alternativeName>
    <alternativeName>
        <fullName evidence="1">Chitotriose deacetylase</fullName>
    </alternativeName>
    <alternativeName>
        <fullName evidence="1">Chitotriose-6P deacetylase</fullName>
    </alternativeName>
</protein>
<name>CHBG_ECOL5</name>
<keyword id="KW-0119">Carbohydrate metabolism</keyword>
<keyword id="KW-0146">Chitin degradation</keyword>
<keyword id="KW-0963">Cytoplasm</keyword>
<keyword id="KW-0378">Hydrolase</keyword>
<keyword id="KW-0460">Magnesium</keyword>
<keyword id="KW-0479">Metal-binding</keyword>
<keyword id="KW-0624">Polysaccharide degradation</keyword>
<sequence>MERLLIVNADDFGLSKGQNYGIIEACRNGIVTSTTALVNGQAIDHAVQLSRDEPSLAIGMHFVLTMGKPLTVMPGLTRDGVLGKWIWQLAEEDALPLEEITQELASQYLRFIELFGRKPTHLDSHHHVHMFPQIFPIVAKFAAEEGIALRIDRQPLSNDGDLPANLRSSQGFSSAFYGEEISEALFLQVLDDSSHRGERSLEVMCHPAFVDNTIRQSAYCFPRLTELDVLTSASLKYAIAERGYRLGSYHDV</sequence>
<feature type="chain" id="PRO_1000067081" description="Chitooligosaccharide deacetylase">
    <location>
        <begin position="1"/>
        <end position="252"/>
    </location>
</feature>
<feature type="binding site" evidence="1">
    <location>
        <position position="61"/>
    </location>
    <ligand>
        <name>Mg(2+)</name>
        <dbReference type="ChEBI" id="CHEBI:18420"/>
    </ligand>
</feature>
<feature type="binding site" evidence="1">
    <location>
        <position position="125"/>
    </location>
    <ligand>
        <name>Mg(2+)</name>
        <dbReference type="ChEBI" id="CHEBI:18420"/>
    </ligand>
</feature>
<evidence type="ECO:0000255" key="1">
    <source>
        <dbReference type="HAMAP-Rule" id="MF_01246"/>
    </source>
</evidence>
<organism>
    <name type="scientific">Escherichia coli O6:K15:H31 (strain 536 / UPEC)</name>
    <dbReference type="NCBI Taxonomy" id="362663"/>
    <lineage>
        <taxon>Bacteria</taxon>
        <taxon>Pseudomonadati</taxon>
        <taxon>Pseudomonadota</taxon>
        <taxon>Gammaproteobacteria</taxon>
        <taxon>Enterobacterales</taxon>
        <taxon>Enterobacteriaceae</taxon>
        <taxon>Escherichia</taxon>
    </lineage>
</organism>
<gene>
    <name evidence="1" type="primary">chbG</name>
    <name type="ordered locus">ECP_1679</name>
</gene>
<dbReference type="EC" id="3.5.1.105" evidence="1"/>
<dbReference type="EMBL" id="CP000247">
    <property type="protein sequence ID" value="ABG69682.1"/>
    <property type="molecule type" value="Genomic_DNA"/>
</dbReference>
<dbReference type="RefSeq" id="WP_000440477.1">
    <property type="nucleotide sequence ID" value="NC_008253.1"/>
</dbReference>
<dbReference type="SMR" id="Q0TH97"/>
<dbReference type="KEGG" id="ecp:ECP_1679"/>
<dbReference type="HOGENOM" id="CLU_064244_4_1_6"/>
<dbReference type="UniPathway" id="UPA00349"/>
<dbReference type="Proteomes" id="UP000009182">
    <property type="component" value="Chromosome"/>
</dbReference>
<dbReference type="GO" id="GO:0005737">
    <property type="term" value="C:cytoplasm"/>
    <property type="evidence" value="ECO:0007669"/>
    <property type="project" value="UniProtKB-SubCell"/>
</dbReference>
<dbReference type="GO" id="GO:0036311">
    <property type="term" value="F:chitin disaccharide deacetylase activity"/>
    <property type="evidence" value="ECO:0007669"/>
    <property type="project" value="UniProtKB-UniRule"/>
</dbReference>
<dbReference type="GO" id="GO:0019213">
    <property type="term" value="F:deacetylase activity"/>
    <property type="evidence" value="ECO:0007669"/>
    <property type="project" value="TreeGrafter"/>
</dbReference>
<dbReference type="GO" id="GO:0046872">
    <property type="term" value="F:metal ion binding"/>
    <property type="evidence" value="ECO:0007669"/>
    <property type="project" value="UniProtKB-KW"/>
</dbReference>
<dbReference type="GO" id="GO:0006032">
    <property type="term" value="P:chitin catabolic process"/>
    <property type="evidence" value="ECO:0007669"/>
    <property type="project" value="UniProtKB-UniPathway"/>
</dbReference>
<dbReference type="GO" id="GO:0052777">
    <property type="term" value="P:diacetylchitobiose catabolic process"/>
    <property type="evidence" value="ECO:0007669"/>
    <property type="project" value="UniProtKB-UniRule"/>
</dbReference>
<dbReference type="GO" id="GO:0000272">
    <property type="term" value="P:polysaccharide catabolic process"/>
    <property type="evidence" value="ECO:0007669"/>
    <property type="project" value="UniProtKB-UniRule"/>
</dbReference>
<dbReference type="CDD" id="cd10803">
    <property type="entry name" value="YdjC_EF3048_like"/>
    <property type="match status" value="1"/>
</dbReference>
<dbReference type="FunFam" id="3.20.20.370:FF:000001">
    <property type="entry name" value="Chitooligosaccharide deacetylase"/>
    <property type="match status" value="1"/>
</dbReference>
<dbReference type="Gene3D" id="3.20.20.370">
    <property type="entry name" value="Glycoside hydrolase/deacetylase"/>
    <property type="match status" value="1"/>
</dbReference>
<dbReference type="HAMAP" id="MF_01246">
    <property type="entry name" value="COD"/>
    <property type="match status" value="1"/>
</dbReference>
<dbReference type="InterPro" id="IPR022948">
    <property type="entry name" value="COD_ChbG_bac"/>
</dbReference>
<dbReference type="InterPro" id="IPR011330">
    <property type="entry name" value="Glyco_hydro/deAcase_b/a-brl"/>
</dbReference>
<dbReference type="InterPro" id="IPR006879">
    <property type="entry name" value="YdjC-like"/>
</dbReference>
<dbReference type="NCBIfam" id="NF002559">
    <property type="entry name" value="PRK02134.1"/>
    <property type="match status" value="1"/>
</dbReference>
<dbReference type="PANTHER" id="PTHR31609:SF1">
    <property type="entry name" value="CARBOHYDRATE DEACETYLASE"/>
    <property type="match status" value="1"/>
</dbReference>
<dbReference type="PANTHER" id="PTHR31609">
    <property type="entry name" value="YDJC DEACETYLASE FAMILY MEMBER"/>
    <property type="match status" value="1"/>
</dbReference>
<dbReference type="Pfam" id="PF04794">
    <property type="entry name" value="YdjC"/>
    <property type="match status" value="1"/>
</dbReference>
<dbReference type="SUPFAM" id="SSF88713">
    <property type="entry name" value="Glycoside hydrolase/deacetylase"/>
    <property type="match status" value="1"/>
</dbReference>
<accession>Q0TH97</accession>
<proteinExistence type="inferred from homology"/>
<comment type="function">
    <text evidence="1">Involved in the degradation of chitin. ChbG is essential for growth on the acetylated chitooligosaccharides chitobiose and chitotriose but is dispensable for growth on cellobiose and chitosan dimer, the deacetylated form of chitobiose. Deacetylation of chitobiose-6-P and chitotriose-6-P is necessary for both the activation of the chb promoter by the regulatory protein ChbR and the hydrolysis of phosphorylated beta-glucosides by the phospho-beta-glucosidase ChbF. Catalyzes the removal of only one acetyl group from chitobiose-6-P to yield monoacetylchitobiose-6-P, the inducer of ChbR and the substrate of ChbF.</text>
</comment>
<comment type="catalytic activity">
    <reaction evidence="1">
        <text>N,N'-diacetylchitobiose + H2O = N-acetyl-beta-D-glucosaminyl-(1-&gt;4)-D-glucosamine + acetate</text>
        <dbReference type="Rhea" id="RHEA:27469"/>
        <dbReference type="ChEBI" id="CHEBI:15377"/>
        <dbReference type="ChEBI" id="CHEBI:28681"/>
        <dbReference type="ChEBI" id="CHEBI:30089"/>
        <dbReference type="ChEBI" id="CHEBI:59910"/>
        <dbReference type="EC" id="3.5.1.105"/>
    </reaction>
</comment>
<comment type="catalytic activity">
    <reaction evidence="1">
        <text>diacetylchitobiose-6'-phosphate + H2O = N'-monoacetylchitobiose-6'-phosphate + acetate</text>
        <dbReference type="Rhea" id="RHEA:35083"/>
        <dbReference type="ChEBI" id="CHEBI:15377"/>
        <dbReference type="ChEBI" id="CHEBI:30089"/>
        <dbReference type="ChEBI" id="CHEBI:64883"/>
        <dbReference type="ChEBI" id="CHEBI:71315"/>
    </reaction>
</comment>
<comment type="cofactor">
    <cofactor evidence="1">
        <name>Mg(2+)</name>
        <dbReference type="ChEBI" id="CHEBI:18420"/>
    </cofactor>
</comment>
<comment type="pathway">
    <text evidence="1">Glycan degradation; chitin degradation.</text>
</comment>
<comment type="subunit">
    <text evidence="1">Homodimer.</text>
</comment>
<comment type="subcellular location">
    <subcellularLocation>
        <location evidence="1">Cytoplasm</location>
    </subcellularLocation>
</comment>
<comment type="similarity">
    <text evidence="1">Belongs to the YdjC deacetylase family. ChbG subfamily.</text>
</comment>